<name>NIKR_METTP</name>
<protein>
    <recommendedName>
        <fullName evidence="1">Putative nickel-responsive regulator</fullName>
    </recommendedName>
</protein>
<sequence>MEQELMRIGVSLPEKLLSRFDEIISQRGYSSRSEGIRDAIRNYIIHYEWMSDVEGERVGVITIVYSHHQRGLVDSLTDIQHEFGSIINSSLHVHLDKDNCLEVVILRGEGKDVRRAAERMMALKGVKHVKLTTTSVGAEL</sequence>
<dbReference type="EMBL" id="CP000477">
    <property type="protein sequence ID" value="ABK14452.1"/>
    <property type="molecule type" value="Genomic_DNA"/>
</dbReference>
<dbReference type="RefSeq" id="WP_011695848.1">
    <property type="nucleotide sequence ID" value="NC_008553.1"/>
</dbReference>
<dbReference type="SMR" id="A0B6X8"/>
<dbReference type="STRING" id="349307.Mthe_0662"/>
<dbReference type="GeneID" id="4463156"/>
<dbReference type="KEGG" id="mtp:Mthe_0662"/>
<dbReference type="HOGENOM" id="CLU_113319_1_2_2"/>
<dbReference type="OrthoDB" id="25654at2157"/>
<dbReference type="Proteomes" id="UP000000674">
    <property type="component" value="Chromosome"/>
</dbReference>
<dbReference type="GO" id="GO:0003677">
    <property type="term" value="F:DNA binding"/>
    <property type="evidence" value="ECO:0007669"/>
    <property type="project" value="UniProtKB-KW"/>
</dbReference>
<dbReference type="GO" id="GO:0003700">
    <property type="term" value="F:DNA-binding transcription factor activity"/>
    <property type="evidence" value="ECO:0007669"/>
    <property type="project" value="UniProtKB-UniRule"/>
</dbReference>
<dbReference type="GO" id="GO:0016151">
    <property type="term" value="F:nickel cation binding"/>
    <property type="evidence" value="ECO:0007669"/>
    <property type="project" value="UniProtKB-UniRule"/>
</dbReference>
<dbReference type="GO" id="GO:0010045">
    <property type="term" value="P:response to nickel cation"/>
    <property type="evidence" value="ECO:0007669"/>
    <property type="project" value="InterPro"/>
</dbReference>
<dbReference type="CDD" id="cd22231">
    <property type="entry name" value="RHH_NikR_HicB-like"/>
    <property type="match status" value="1"/>
</dbReference>
<dbReference type="Gene3D" id="3.30.70.1150">
    <property type="entry name" value="ACT-like. Chain A, domain 2"/>
    <property type="match status" value="1"/>
</dbReference>
<dbReference type="Gene3D" id="1.10.1220.10">
    <property type="entry name" value="Met repressor-like"/>
    <property type="match status" value="1"/>
</dbReference>
<dbReference type="HAMAP" id="MF_00476">
    <property type="entry name" value="NikR"/>
    <property type="match status" value="1"/>
</dbReference>
<dbReference type="InterPro" id="IPR027271">
    <property type="entry name" value="Acetolactate_synth/TF_NikR_C"/>
</dbReference>
<dbReference type="InterPro" id="IPR045865">
    <property type="entry name" value="ACT-like_dom_sf"/>
</dbReference>
<dbReference type="InterPro" id="IPR013321">
    <property type="entry name" value="Arc_rbn_hlx_hlx"/>
</dbReference>
<dbReference type="InterPro" id="IPR002145">
    <property type="entry name" value="CopG"/>
</dbReference>
<dbReference type="InterPro" id="IPR050192">
    <property type="entry name" value="CopG/NikR_regulator"/>
</dbReference>
<dbReference type="InterPro" id="IPR022988">
    <property type="entry name" value="Ni_resp_reg_NikR"/>
</dbReference>
<dbReference type="InterPro" id="IPR010985">
    <property type="entry name" value="Ribbon_hlx_hlx"/>
</dbReference>
<dbReference type="InterPro" id="IPR014864">
    <property type="entry name" value="TF_NikR_Ni-bd_C"/>
</dbReference>
<dbReference type="NCBIfam" id="NF001884">
    <property type="entry name" value="PRK00630.1"/>
    <property type="match status" value="1"/>
</dbReference>
<dbReference type="NCBIfam" id="NF002169">
    <property type="entry name" value="PRK01002.1"/>
    <property type="match status" value="1"/>
</dbReference>
<dbReference type="NCBIfam" id="NF002815">
    <property type="entry name" value="PRK02967.1"/>
    <property type="match status" value="1"/>
</dbReference>
<dbReference type="NCBIfam" id="NF003381">
    <property type="entry name" value="PRK04460.1"/>
    <property type="match status" value="1"/>
</dbReference>
<dbReference type="PANTHER" id="PTHR34719">
    <property type="entry name" value="NICKEL-RESPONSIVE REGULATOR"/>
    <property type="match status" value="1"/>
</dbReference>
<dbReference type="PANTHER" id="PTHR34719:SF2">
    <property type="entry name" value="NICKEL-RESPONSIVE REGULATOR"/>
    <property type="match status" value="1"/>
</dbReference>
<dbReference type="Pfam" id="PF08753">
    <property type="entry name" value="NikR_C"/>
    <property type="match status" value="1"/>
</dbReference>
<dbReference type="Pfam" id="PF01402">
    <property type="entry name" value="RHH_1"/>
    <property type="match status" value="1"/>
</dbReference>
<dbReference type="SUPFAM" id="SSF55021">
    <property type="entry name" value="ACT-like"/>
    <property type="match status" value="1"/>
</dbReference>
<dbReference type="SUPFAM" id="SSF47598">
    <property type="entry name" value="Ribbon-helix-helix"/>
    <property type="match status" value="1"/>
</dbReference>
<gene>
    <name type="ordered locus">Mthe_0662</name>
</gene>
<keyword id="KW-0238">DNA-binding</keyword>
<keyword id="KW-0479">Metal-binding</keyword>
<keyword id="KW-0533">Nickel</keyword>
<keyword id="KW-1185">Reference proteome</keyword>
<keyword id="KW-0804">Transcription</keyword>
<keyword id="KW-0805">Transcription regulation</keyword>
<reference key="1">
    <citation type="submission" date="2006-10" db="EMBL/GenBank/DDBJ databases">
        <title>Complete sequence of Methanosaeta thermophila PT.</title>
        <authorList>
            <consortium name="US DOE Joint Genome Institute"/>
            <person name="Copeland A."/>
            <person name="Lucas S."/>
            <person name="Lapidus A."/>
            <person name="Barry K."/>
            <person name="Detter J.C."/>
            <person name="Glavina del Rio T."/>
            <person name="Hammon N."/>
            <person name="Israni S."/>
            <person name="Pitluck S."/>
            <person name="Chain P."/>
            <person name="Malfatti S."/>
            <person name="Shin M."/>
            <person name="Vergez L."/>
            <person name="Schmutz J."/>
            <person name="Larimer F."/>
            <person name="Land M."/>
            <person name="Hauser L."/>
            <person name="Kyrpides N."/>
            <person name="Kim E."/>
            <person name="Smith K.S."/>
            <person name="Ingram-Smith C."/>
            <person name="Richardson P."/>
        </authorList>
    </citation>
    <scope>NUCLEOTIDE SEQUENCE [LARGE SCALE GENOMIC DNA]</scope>
    <source>
        <strain>DSM 6194 / JCM 14653 / NBRC 101360 / PT</strain>
    </source>
</reference>
<comment type="function">
    <text evidence="1">Transcriptional regulator.</text>
</comment>
<comment type="cofactor">
    <cofactor evidence="1">
        <name>Ni(2+)</name>
        <dbReference type="ChEBI" id="CHEBI:49786"/>
    </cofactor>
    <text evidence="1">Binds 1 nickel ion per subunit.</text>
</comment>
<comment type="similarity">
    <text evidence="1">Belongs to the transcriptional regulatory CopG/NikR family.</text>
</comment>
<evidence type="ECO:0000255" key="1">
    <source>
        <dbReference type="HAMAP-Rule" id="MF_00476"/>
    </source>
</evidence>
<organism>
    <name type="scientific">Methanothrix thermoacetophila (strain DSM 6194 / JCM 14653 / NBRC 101360 / PT)</name>
    <name type="common">Methanosaeta thermophila</name>
    <dbReference type="NCBI Taxonomy" id="349307"/>
    <lineage>
        <taxon>Archaea</taxon>
        <taxon>Methanobacteriati</taxon>
        <taxon>Methanobacteriota</taxon>
        <taxon>Stenosarchaea group</taxon>
        <taxon>Methanomicrobia</taxon>
        <taxon>Methanotrichales</taxon>
        <taxon>Methanotrichaceae</taxon>
        <taxon>Methanothrix</taxon>
    </lineage>
</organism>
<proteinExistence type="inferred from homology"/>
<accession>A0B6X8</accession>
<feature type="chain" id="PRO_1000014075" description="Putative nickel-responsive regulator">
    <location>
        <begin position="1"/>
        <end position="140"/>
    </location>
</feature>
<feature type="binding site" evidence="1">
    <location>
        <position position="81"/>
    </location>
    <ligand>
        <name>Ni(2+)</name>
        <dbReference type="ChEBI" id="CHEBI:49786"/>
    </ligand>
</feature>
<feature type="binding site" evidence="1">
    <location>
        <position position="92"/>
    </location>
    <ligand>
        <name>Ni(2+)</name>
        <dbReference type="ChEBI" id="CHEBI:49786"/>
    </ligand>
</feature>
<feature type="binding site" evidence="1">
    <location>
        <position position="94"/>
    </location>
    <ligand>
        <name>Ni(2+)</name>
        <dbReference type="ChEBI" id="CHEBI:49786"/>
    </ligand>
</feature>
<feature type="binding site" evidence="1">
    <location>
        <position position="100"/>
    </location>
    <ligand>
        <name>Ni(2+)</name>
        <dbReference type="ChEBI" id="CHEBI:49786"/>
    </ligand>
</feature>